<comment type="function">
    <text evidence="1">The beta subunit is responsible for the synthesis of L-tryptophan from indole and L-serine.</text>
</comment>
<comment type="catalytic activity">
    <reaction evidence="1">
        <text>(1S,2R)-1-C-(indol-3-yl)glycerol 3-phosphate + L-serine = D-glyceraldehyde 3-phosphate + L-tryptophan + H2O</text>
        <dbReference type="Rhea" id="RHEA:10532"/>
        <dbReference type="ChEBI" id="CHEBI:15377"/>
        <dbReference type="ChEBI" id="CHEBI:33384"/>
        <dbReference type="ChEBI" id="CHEBI:57912"/>
        <dbReference type="ChEBI" id="CHEBI:58866"/>
        <dbReference type="ChEBI" id="CHEBI:59776"/>
        <dbReference type="EC" id="4.2.1.20"/>
    </reaction>
</comment>
<comment type="cofactor">
    <cofactor evidence="1">
        <name>pyridoxal 5'-phosphate</name>
        <dbReference type="ChEBI" id="CHEBI:597326"/>
    </cofactor>
</comment>
<comment type="pathway">
    <text evidence="1">Amino-acid biosynthesis; L-tryptophan biosynthesis; L-tryptophan from chorismate: step 5/5.</text>
</comment>
<comment type="subunit">
    <text evidence="1">Tetramer of two alpha and two beta chains.</text>
</comment>
<comment type="similarity">
    <text evidence="1">Belongs to the TrpB family.</text>
</comment>
<protein>
    <recommendedName>
        <fullName evidence="1">Tryptophan synthase beta chain</fullName>
        <ecNumber evidence="1">4.2.1.20</ecNumber>
    </recommendedName>
</protein>
<proteinExistence type="inferred from homology"/>
<dbReference type="EC" id="4.2.1.20" evidence="1"/>
<dbReference type="EMBL" id="BX294152">
    <property type="protein sequence ID" value="CAD76895.1"/>
    <property type="molecule type" value="Genomic_DNA"/>
</dbReference>
<dbReference type="RefSeq" id="NP_869534.1">
    <property type="nucleotide sequence ID" value="NC_005027.1"/>
</dbReference>
<dbReference type="RefSeq" id="WP_007324127.1">
    <property type="nucleotide sequence ID" value="NC_005027.1"/>
</dbReference>
<dbReference type="SMR" id="Q7UKG9"/>
<dbReference type="FunCoup" id="Q7UKG9">
    <property type="interactions" value="502"/>
</dbReference>
<dbReference type="STRING" id="243090.RB10650"/>
<dbReference type="EnsemblBacteria" id="CAD76895">
    <property type="protein sequence ID" value="CAD76895"/>
    <property type="gene ID" value="RB10650"/>
</dbReference>
<dbReference type="KEGG" id="rba:RB10650"/>
<dbReference type="PATRIC" id="fig|243090.15.peg.5144"/>
<dbReference type="eggNOG" id="COG0133">
    <property type="taxonomic scope" value="Bacteria"/>
</dbReference>
<dbReference type="HOGENOM" id="CLU_016734_3_1_0"/>
<dbReference type="InParanoid" id="Q7UKG9"/>
<dbReference type="OrthoDB" id="9766131at2"/>
<dbReference type="UniPathway" id="UPA00035">
    <property type="reaction ID" value="UER00044"/>
</dbReference>
<dbReference type="Proteomes" id="UP000001025">
    <property type="component" value="Chromosome"/>
</dbReference>
<dbReference type="GO" id="GO:0005737">
    <property type="term" value="C:cytoplasm"/>
    <property type="evidence" value="ECO:0000318"/>
    <property type="project" value="GO_Central"/>
</dbReference>
<dbReference type="GO" id="GO:0004834">
    <property type="term" value="F:tryptophan synthase activity"/>
    <property type="evidence" value="ECO:0007669"/>
    <property type="project" value="UniProtKB-UniRule"/>
</dbReference>
<dbReference type="GO" id="GO:0000162">
    <property type="term" value="P:L-tryptophan biosynthetic process"/>
    <property type="evidence" value="ECO:0000318"/>
    <property type="project" value="GO_Central"/>
</dbReference>
<dbReference type="CDD" id="cd06446">
    <property type="entry name" value="Trp-synth_B"/>
    <property type="match status" value="1"/>
</dbReference>
<dbReference type="FunFam" id="3.40.50.1100:FF:000001">
    <property type="entry name" value="Tryptophan synthase beta chain"/>
    <property type="match status" value="1"/>
</dbReference>
<dbReference type="FunFam" id="3.40.50.1100:FF:000004">
    <property type="entry name" value="Tryptophan synthase beta chain"/>
    <property type="match status" value="1"/>
</dbReference>
<dbReference type="Gene3D" id="3.40.50.1100">
    <property type="match status" value="2"/>
</dbReference>
<dbReference type="HAMAP" id="MF_00133">
    <property type="entry name" value="Trp_synth_beta"/>
    <property type="match status" value="1"/>
</dbReference>
<dbReference type="InterPro" id="IPR006653">
    <property type="entry name" value="Trp_synth_b_CS"/>
</dbReference>
<dbReference type="InterPro" id="IPR006654">
    <property type="entry name" value="Trp_synth_beta"/>
</dbReference>
<dbReference type="InterPro" id="IPR023026">
    <property type="entry name" value="Trp_synth_beta/beta-like"/>
</dbReference>
<dbReference type="InterPro" id="IPR001926">
    <property type="entry name" value="TrpB-like_PALP"/>
</dbReference>
<dbReference type="InterPro" id="IPR036052">
    <property type="entry name" value="TrpB-like_PALP_sf"/>
</dbReference>
<dbReference type="NCBIfam" id="TIGR00263">
    <property type="entry name" value="trpB"/>
    <property type="match status" value="1"/>
</dbReference>
<dbReference type="PANTHER" id="PTHR48077:SF3">
    <property type="entry name" value="TRYPTOPHAN SYNTHASE"/>
    <property type="match status" value="1"/>
</dbReference>
<dbReference type="PANTHER" id="PTHR48077">
    <property type="entry name" value="TRYPTOPHAN SYNTHASE-RELATED"/>
    <property type="match status" value="1"/>
</dbReference>
<dbReference type="Pfam" id="PF00291">
    <property type="entry name" value="PALP"/>
    <property type="match status" value="1"/>
</dbReference>
<dbReference type="PIRSF" id="PIRSF001413">
    <property type="entry name" value="Trp_syn_beta"/>
    <property type="match status" value="1"/>
</dbReference>
<dbReference type="SUPFAM" id="SSF53686">
    <property type="entry name" value="Tryptophan synthase beta subunit-like PLP-dependent enzymes"/>
    <property type="match status" value="1"/>
</dbReference>
<dbReference type="PROSITE" id="PS00168">
    <property type="entry name" value="TRP_SYNTHASE_BETA"/>
    <property type="match status" value="1"/>
</dbReference>
<keyword id="KW-0028">Amino-acid biosynthesis</keyword>
<keyword id="KW-0057">Aromatic amino acid biosynthesis</keyword>
<keyword id="KW-0456">Lyase</keyword>
<keyword id="KW-0663">Pyridoxal phosphate</keyword>
<keyword id="KW-1185">Reference proteome</keyword>
<keyword id="KW-0822">Tryptophan biosynthesis</keyword>
<name>TRPB_RHOBA</name>
<organism>
    <name type="scientific">Rhodopirellula baltica (strain DSM 10527 / NCIMB 13988 / SH1)</name>
    <dbReference type="NCBI Taxonomy" id="243090"/>
    <lineage>
        <taxon>Bacteria</taxon>
        <taxon>Pseudomonadati</taxon>
        <taxon>Planctomycetota</taxon>
        <taxon>Planctomycetia</taxon>
        <taxon>Pirellulales</taxon>
        <taxon>Pirellulaceae</taxon>
        <taxon>Rhodopirellula</taxon>
    </lineage>
</organism>
<reference key="1">
    <citation type="journal article" date="2003" name="Proc. Natl. Acad. Sci. U.S.A.">
        <title>Complete genome sequence of the marine planctomycete Pirellula sp. strain 1.</title>
        <authorList>
            <person name="Gloeckner F.O."/>
            <person name="Kube M."/>
            <person name="Bauer M."/>
            <person name="Teeling H."/>
            <person name="Lombardot T."/>
            <person name="Ludwig W."/>
            <person name="Gade D."/>
            <person name="Beck A."/>
            <person name="Borzym K."/>
            <person name="Heitmann K."/>
            <person name="Rabus R."/>
            <person name="Schlesner H."/>
            <person name="Amann R."/>
            <person name="Reinhardt R."/>
        </authorList>
    </citation>
    <scope>NUCLEOTIDE SEQUENCE [LARGE SCALE GENOMIC DNA]</scope>
    <source>
        <strain>DSM 10527 / NCIMB 13988 / SH1</strain>
    </source>
</reference>
<sequence>MSTAPSQQHASAQVPDPRGRFGDFGGRFVPETLTRALDELSEEYEKAKRDPEFQRELDGLLKTFVGRPSPLYHAKRLSSAVGGAQIWLKREDLNHTGAHKINNTIGQALLTLRMGKTRVIAETGAGQHGVASATACAHFGLPCTVYMGAEDIRRQKPNVFSMKLLGANISAVESGSRTLRDAVNEAMRDWMSSVEDTHYIIGSVIGPHPFPMMVRDFQSVIGRETREQCRDTFGRLPDCVVACVGGGSNAAGMFYPFVEDEGVRMVGVEAGGRSATPGDHASPLSYGNPGVLHGSYSYVMQDEDGQTCDVHSMSAGLDYPGVGPEHSYWKDTKRVDYIDCRDDEALTAFERLASSEGILAALETSHAVAKAIEIAGKMSDQEHLVICLSGRGDKDSMEIARLRGEEW</sequence>
<accession>Q7UKG9</accession>
<feature type="chain" id="PRO_0000098991" description="Tryptophan synthase beta chain">
    <location>
        <begin position="1"/>
        <end position="407"/>
    </location>
</feature>
<feature type="region of interest" description="Disordered" evidence="2">
    <location>
        <begin position="1"/>
        <end position="25"/>
    </location>
</feature>
<feature type="compositionally biased region" description="Polar residues" evidence="2">
    <location>
        <begin position="1"/>
        <end position="11"/>
    </location>
</feature>
<feature type="modified residue" description="N6-(pyridoxal phosphate)lysine" evidence="1">
    <location>
        <position position="100"/>
    </location>
</feature>
<evidence type="ECO:0000255" key="1">
    <source>
        <dbReference type="HAMAP-Rule" id="MF_00133"/>
    </source>
</evidence>
<evidence type="ECO:0000256" key="2">
    <source>
        <dbReference type="SAM" id="MobiDB-lite"/>
    </source>
</evidence>
<gene>
    <name evidence="1" type="primary">trpB</name>
    <name type="ordered locus">RB10650</name>
</gene>